<name>IF6_METS3</name>
<accession>A5UL31</accession>
<organism>
    <name type="scientific">Methanobrevibacter smithii (strain ATCC 35061 / DSM 861 / OCM 144 / PS)</name>
    <dbReference type="NCBI Taxonomy" id="420247"/>
    <lineage>
        <taxon>Archaea</taxon>
        <taxon>Methanobacteriati</taxon>
        <taxon>Methanobacteriota</taxon>
        <taxon>Methanomada group</taxon>
        <taxon>Methanobacteria</taxon>
        <taxon>Methanobacteriales</taxon>
        <taxon>Methanobacteriaceae</taxon>
        <taxon>Methanobrevibacter</taxon>
    </lineage>
</organism>
<evidence type="ECO:0000255" key="1">
    <source>
        <dbReference type="HAMAP-Rule" id="MF_00032"/>
    </source>
</evidence>
<keyword id="KW-0396">Initiation factor</keyword>
<keyword id="KW-0648">Protein biosynthesis</keyword>
<gene>
    <name evidence="1" type="primary">eif6</name>
    <name type="ordered locus">Msm_0704</name>
</gene>
<proteinExistence type="inferred from homology"/>
<feature type="chain" id="PRO_1000002602" description="Translation initiation factor 6">
    <location>
        <begin position="1"/>
        <end position="223"/>
    </location>
</feature>
<dbReference type="EMBL" id="CP000678">
    <property type="protein sequence ID" value="ABQ86909.1"/>
    <property type="molecule type" value="Genomic_DNA"/>
</dbReference>
<dbReference type="RefSeq" id="WP_004032461.1">
    <property type="nucleotide sequence ID" value="NZ_CP117965.1"/>
</dbReference>
<dbReference type="SMR" id="A5UL31"/>
<dbReference type="STRING" id="420247.Msm_0704"/>
<dbReference type="EnsemblBacteria" id="ABQ86909">
    <property type="protein sequence ID" value="ABQ86909"/>
    <property type="gene ID" value="Msm_0704"/>
</dbReference>
<dbReference type="KEGG" id="msi:Msm_0704"/>
<dbReference type="PATRIC" id="fig|420247.28.peg.701"/>
<dbReference type="eggNOG" id="arCOG04176">
    <property type="taxonomic scope" value="Archaea"/>
</dbReference>
<dbReference type="HOGENOM" id="CLU_071894_1_0_2"/>
<dbReference type="Proteomes" id="UP000001992">
    <property type="component" value="Chromosome"/>
</dbReference>
<dbReference type="GO" id="GO:0043022">
    <property type="term" value="F:ribosome binding"/>
    <property type="evidence" value="ECO:0007669"/>
    <property type="project" value="InterPro"/>
</dbReference>
<dbReference type="GO" id="GO:0003743">
    <property type="term" value="F:translation initiation factor activity"/>
    <property type="evidence" value="ECO:0007669"/>
    <property type="project" value="UniProtKB-UniRule"/>
</dbReference>
<dbReference type="GO" id="GO:0042256">
    <property type="term" value="P:cytosolic ribosome assembly"/>
    <property type="evidence" value="ECO:0007669"/>
    <property type="project" value="InterPro"/>
</dbReference>
<dbReference type="Gene3D" id="3.75.10.10">
    <property type="entry name" value="L-arginine/glycine Amidinotransferase, Chain A"/>
    <property type="match status" value="1"/>
</dbReference>
<dbReference type="HAMAP" id="MF_00032">
    <property type="entry name" value="eIF_6"/>
    <property type="match status" value="1"/>
</dbReference>
<dbReference type="InterPro" id="IPR002769">
    <property type="entry name" value="eIF6"/>
</dbReference>
<dbReference type="NCBIfam" id="TIGR00323">
    <property type="entry name" value="eIF-6"/>
    <property type="match status" value="1"/>
</dbReference>
<dbReference type="NCBIfam" id="NF003133">
    <property type="entry name" value="PRK04046.2-5"/>
    <property type="match status" value="1"/>
</dbReference>
<dbReference type="PANTHER" id="PTHR10784">
    <property type="entry name" value="TRANSLATION INITIATION FACTOR 6"/>
    <property type="match status" value="1"/>
</dbReference>
<dbReference type="Pfam" id="PF01912">
    <property type="entry name" value="eIF-6"/>
    <property type="match status" value="1"/>
</dbReference>
<dbReference type="PIRSF" id="PIRSF006413">
    <property type="entry name" value="IF-6"/>
    <property type="match status" value="1"/>
</dbReference>
<dbReference type="SMART" id="SM00654">
    <property type="entry name" value="eIF6"/>
    <property type="match status" value="1"/>
</dbReference>
<dbReference type="SUPFAM" id="SSF55909">
    <property type="entry name" value="Pentein"/>
    <property type="match status" value="1"/>
</dbReference>
<protein>
    <recommendedName>
        <fullName evidence="1">Translation initiation factor 6</fullName>
        <shortName evidence="1">aIF-6</shortName>
    </recommendedName>
</protein>
<sequence>MLRRINIVDNPNIGVFILATDDLAVVPYNLLDEKVKLIEETLEVDAVKSSISGCNLIGSLAVANSNGIVVSPHVLDREVKQFEELGLNVATIPGNYTAVGNIVAANDTGAIVSPFLSDEAVKVIEDTLDVNVESTSMVGSDIIGSLITVTNKGFLMDKNATETEVDFARDVFGVEGDIGTVGRGISLVGACSLANSSGAIVAKESTGPEMARVEEALGFLDDL</sequence>
<comment type="function">
    <text evidence="1">Binds to the 50S ribosomal subunit and prevents its association with the 30S ribosomal subunit to form the 70S initiation complex.</text>
</comment>
<comment type="similarity">
    <text evidence="1">Belongs to the eIF-6 family.</text>
</comment>
<reference key="1">
    <citation type="journal article" date="2007" name="Proc. Natl. Acad. Sci. U.S.A.">
        <title>Genomic and metabolic adaptations of Methanobrevibacter smithii to the human gut.</title>
        <authorList>
            <person name="Samuel B.S."/>
            <person name="Hansen E.E."/>
            <person name="Manchester J.K."/>
            <person name="Coutinho P.M."/>
            <person name="Henrissat B."/>
            <person name="Fulton R."/>
            <person name="Latreille P."/>
            <person name="Kim K."/>
            <person name="Wilson R.K."/>
            <person name="Gordon J.I."/>
        </authorList>
    </citation>
    <scope>NUCLEOTIDE SEQUENCE [LARGE SCALE GENOMIC DNA]</scope>
    <source>
        <strain>ATCC 35061 / DSM 861 / OCM 144 / PS</strain>
    </source>
</reference>